<protein>
    <recommendedName>
        <fullName>Protein kinase C iota type</fullName>
        <ecNumber>2.7.11.13</ecNumber>
    </recommendedName>
    <alternativeName>
        <fullName>Atypical protein kinase C-lambda/iota</fullName>
        <shortName>aPKC-lambda/iota</shortName>
    </alternativeName>
    <alternativeName>
        <fullName>nPKC-iota</fullName>
    </alternativeName>
</protein>
<proteinExistence type="evidence at protein level"/>
<comment type="function">
    <text evidence="1 2 12 13 14 15 20">Calcium- and diacylglycerol-independent serine/ threonine-protein kinase that plays a general protective role against apoptotic stimuli, is involved in NF-kappa-B activation, cell survival, differentiation and polarity, and contributes to the regulation of microtubule dynamics in the early secretory pathway. Is necessary for BCR-ABL oncogene-mediated resistance to apoptotic drug in leukemia cells, protecting leukemia cells against drug-induced apoptosis. In cultured neurons, prevents amyloid beta protein-induced apoptosis by interrupting cell death process at a very early step. In glioblastoma cells, may function downstream of phosphatidylinositol 3-kinase (PI3K) and PDPK1 in the promotion of cell survival by phosphorylating and inhibiting the pro-apoptotic factor BAD. Can form a protein complex in non-small cell lung cancer (NSCLC) cells with PARD6A and ECT2 and regulate ECT2 oncogenic activity by phosphorylation, which in turn promotes transformed growth and invasion. In response to nerve growth factor (NGF), acts downstream of SRC to phosphorylate and activate IRAK1, allowing the subsequent activation of NF-kappa-B and neuronal cell survival. Functions in the organization of the apical domain in epithelial cells by phosphorylating EZR. This step is crucial for activation and normal distribution of EZR at the early stages of intestinal epithelial cell differentiation. Forms a protein complex with LLGL1 and PARD6B independently of PARD3 to regulate epithelial cell polarity. Plays a role in microtubule dynamics in the early secretory pathway through interaction with RAB2A and GAPDH and recruitment to vesicular tubular clusters (VTCs). In human coronary artery endothelial cells (HCAEC), is activated by saturated fatty acids and mediates lipid-induced apoptosis (By similarity). Downstream of PI3K is required for insulin-stimulated glucose transport. Activates RAB4A and promotes its association with KIF3A which is required for the insulin-induced SLC2A4/GLUT4 translocation in adipocytes. Is essential in early embryogenesis and development of differentiating photoreceptors by playing a role in the establishment of epithelial and neuronal polarity. Involved in early synaptic long term potentiation phase in CA1 hippocampal cells and short term memory formation (By similarity).</text>
</comment>
<comment type="catalytic activity">
    <reaction>
        <text>L-seryl-[protein] + ATP = O-phospho-L-seryl-[protein] + ADP + H(+)</text>
        <dbReference type="Rhea" id="RHEA:17989"/>
        <dbReference type="Rhea" id="RHEA-COMP:9863"/>
        <dbReference type="Rhea" id="RHEA-COMP:11604"/>
        <dbReference type="ChEBI" id="CHEBI:15378"/>
        <dbReference type="ChEBI" id="CHEBI:29999"/>
        <dbReference type="ChEBI" id="CHEBI:30616"/>
        <dbReference type="ChEBI" id="CHEBI:83421"/>
        <dbReference type="ChEBI" id="CHEBI:456216"/>
        <dbReference type="EC" id="2.7.11.13"/>
    </reaction>
</comment>
<comment type="catalytic activity">
    <reaction>
        <text>L-threonyl-[protein] + ATP = O-phospho-L-threonyl-[protein] + ADP + H(+)</text>
        <dbReference type="Rhea" id="RHEA:46608"/>
        <dbReference type="Rhea" id="RHEA-COMP:11060"/>
        <dbReference type="Rhea" id="RHEA-COMP:11605"/>
        <dbReference type="ChEBI" id="CHEBI:15378"/>
        <dbReference type="ChEBI" id="CHEBI:30013"/>
        <dbReference type="ChEBI" id="CHEBI:30616"/>
        <dbReference type="ChEBI" id="CHEBI:61977"/>
        <dbReference type="ChEBI" id="CHEBI:456216"/>
        <dbReference type="EC" id="2.7.11.13"/>
    </reaction>
</comment>
<comment type="activity regulation">
    <text evidence="1">Atypical PKCs (PRKCI and PRKCZ) exhibit an elevated basal enzymatic activity (that may be due to the interaction with SMG1 or SQSTM1) and are not regulated by diacylglycerol, phosphatidylserine, phorbol esters or calcium ions. Two specific sites, Thr-411 (activation loop of the kinase domain) and Thr-563 (turn motif), need to be phosphorylated for its full activation (By similarity). Might also be a target for novel lipid activators that are elevated during nutrient-stimulated insulin secretion.</text>
</comment>
<comment type="subunit">
    <text evidence="3 10 11 16 17 21">Forms a complex with SQSTM1 and MP2K5 (PubMed:12813044). Interacts directly with SQSTM1 (Probable). Interacts with IKBKB. Interacts with PARD6A, PARD6B and PARD6G. Part of a quaternary complex containing aPKC, PARD3, a PARD6 protein (PARD6A, PARD6B or PARD6G) and a GTPase protein (CDC42 or RAC1) (PubMed:10934474). Part of a complex with LLGL1 and PARD6B. Interacts with ADAP1/CENTA1. Interaction with SMG1, through the ZN-finger domain, activates the kinase activity. Interacts with CDK7. Forms a complex with RAB2A and GAPDH involved in recruitment onto the membrane of vesicular tubular clusters (VTCs). Interacts with ECT2 ('Thr-359' phosphorylated form) (By similarity). Interacts with VAMP2 (PubMed:17313651). Interacts with WDFY2 (via WD repeats 1-3) (PubMed:16792529).</text>
</comment>
<comment type="interaction">
    <interactant intactId="EBI-82016">
        <id>Q62074</id>
    </interactant>
    <interactant intactId="EBI-15622277">
        <id>Q8R1S4</id>
        <label>Mtss1</label>
    </interactant>
    <organismsDiffer>false</organismsDiffer>
    <experiments>4</experiments>
</comment>
<comment type="interaction">
    <interactant intactId="EBI-82016">
        <id>Q62074</id>
    </interactant>
    <interactant intactId="EBI-81968">
        <id>Q8TEW0</id>
        <label>PARD3</label>
    </interactant>
    <organismsDiffer>true</organismsDiffer>
    <experiments>7</experiments>
</comment>
<comment type="subcellular location">
    <subcellularLocation>
        <location evidence="3">Cytoplasm</location>
    </subcellularLocation>
    <subcellularLocation>
        <location evidence="3">Membrane</location>
    </subcellularLocation>
    <subcellularLocation>
        <location evidence="3">Endosome</location>
    </subcellularLocation>
    <subcellularLocation>
        <location evidence="3">Nucleus</location>
    </subcellularLocation>
    <text evidence="3">Transported into the endosome through interaction with SQSTM1/p62. After phosphorylation by SRC, transported into the nucleus through interaction with KPNB1. Colocalizes with CDK7 in the cytoplasm and nucleus. Transported to vesicular tubular clusters (VTCs) through interaction with RAB2A.</text>
</comment>
<comment type="developmental stage">
    <text evidence="18">Expressed apically in the cortical neuroepithelium along the ventricular surface at 14.5 dpc.</text>
</comment>
<comment type="domain">
    <text>The PB1 domain mediates interaction with SQSTM1.</text>
</comment>
<comment type="domain">
    <text evidence="1">The C1 zinc finger does not bind diacylglycerol (DAG).</text>
</comment>
<comment type="domain">
    <text>The pseudosubstrate motif resembles the sequence around sites phosphorylated on target proteins, except the presence of a non-phosphorylatable residue in place of Ser, it modulates activity by competing with substrates.</text>
</comment>
<comment type="PTM">
    <text evidence="2 3 19">Phosphorylation at Thr-411 in the activation loop is not mandatory for activation (PubMed:22579248). Upon neuronal growth factor (NGF) stimulation, phosphorylated by SRC at Tyr-264, Tyr-279 and Tyr-333 (By similarity). Phosphorylation on Tyr-264 facilitates binding to KPNB1/importin-beta regulating entry of PRKCI into the nucleus (By similarity). Phosphorylation on Tyr-333 is important for NF-kappa-B stimulation (By similarity). Phosphorylated at Thr-563 during the initial phase of long term potentiation (By similarity).</text>
</comment>
<comment type="disruption phenotype">
    <text evidence="14">Embryonic lethal at 9.5 dpc.</text>
</comment>
<comment type="similarity">
    <text evidence="21">Belongs to the protein kinase superfamily. AGC Ser/Thr protein kinase family. PKC subfamily.</text>
</comment>
<comment type="sequence caution" evidence="21">
    <conflict type="erroneous initiation">
        <sequence resource="EMBL-CDS" id="AAH21630"/>
    </conflict>
    <text>Truncated N-terminus.</text>
</comment>
<comment type="sequence caution" evidence="21">
    <conflict type="erroneous initiation">
        <sequence resource="EMBL-CDS" id="BAA32499"/>
    </conflict>
    <text>Truncated N-terminus.</text>
</comment>
<organism>
    <name type="scientific">Mus musculus</name>
    <name type="common">Mouse</name>
    <dbReference type="NCBI Taxonomy" id="10090"/>
    <lineage>
        <taxon>Eukaryota</taxon>
        <taxon>Metazoa</taxon>
        <taxon>Chordata</taxon>
        <taxon>Craniata</taxon>
        <taxon>Vertebrata</taxon>
        <taxon>Euteleostomi</taxon>
        <taxon>Mammalia</taxon>
        <taxon>Eutheria</taxon>
        <taxon>Euarchontoglires</taxon>
        <taxon>Glires</taxon>
        <taxon>Rodentia</taxon>
        <taxon>Myomorpha</taxon>
        <taxon>Muroidea</taxon>
        <taxon>Muridae</taxon>
        <taxon>Murinae</taxon>
        <taxon>Mus</taxon>
        <taxon>Mus</taxon>
    </lineage>
</organism>
<name>KPCI_MOUSE</name>
<keyword id="KW-0002">3D-structure</keyword>
<keyword id="KW-0007">Acetylation</keyword>
<keyword id="KW-0067">ATP-binding</keyword>
<keyword id="KW-0963">Cytoplasm</keyword>
<keyword id="KW-0217">Developmental protein</keyword>
<keyword id="KW-0967">Endosome</keyword>
<keyword id="KW-0418">Kinase</keyword>
<keyword id="KW-0472">Membrane</keyword>
<keyword id="KW-0479">Metal-binding</keyword>
<keyword id="KW-0547">Nucleotide-binding</keyword>
<keyword id="KW-0539">Nucleus</keyword>
<keyword id="KW-0597">Phosphoprotein</keyword>
<keyword id="KW-0656">Proto-oncogene</keyword>
<keyword id="KW-1185">Reference proteome</keyword>
<keyword id="KW-0723">Serine/threonine-protein kinase</keyword>
<keyword id="KW-0808">Transferase</keyword>
<keyword id="KW-0043">Tumor suppressor</keyword>
<keyword id="KW-0862">Zinc</keyword>
<keyword id="KW-0863">Zinc-finger</keyword>
<gene>
    <name type="primary">Prkci</name>
    <name type="synonym">Pkcl</name>
</gene>
<accession>Q62074</accession>
<evidence type="ECO:0000250" key="1"/>
<evidence type="ECO:0000250" key="2">
    <source>
        <dbReference type="UniProtKB" id="F1M7Y5"/>
    </source>
</evidence>
<evidence type="ECO:0000250" key="3">
    <source>
        <dbReference type="UniProtKB" id="P41743"/>
    </source>
</evidence>
<evidence type="ECO:0000255" key="4">
    <source>
        <dbReference type="PROSITE-ProRule" id="PRU00159"/>
    </source>
</evidence>
<evidence type="ECO:0000255" key="5">
    <source>
        <dbReference type="PROSITE-ProRule" id="PRU00226"/>
    </source>
</evidence>
<evidence type="ECO:0000255" key="6">
    <source>
        <dbReference type="PROSITE-ProRule" id="PRU00618"/>
    </source>
</evidence>
<evidence type="ECO:0000255" key="7">
    <source>
        <dbReference type="PROSITE-ProRule" id="PRU01081"/>
    </source>
</evidence>
<evidence type="ECO:0000255" key="8">
    <source>
        <dbReference type="PROSITE-ProRule" id="PRU10027"/>
    </source>
</evidence>
<evidence type="ECO:0000256" key="9">
    <source>
        <dbReference type="SAM" id="MobiDB-lite"/>
    </source>
</evidence>
<evidence type="ECO:0000269" key="10">
    <source>
    </source>
</evidence>
<evidence type="ECO:0000269" key="11">
    <source>
    </source>
</evidence>
<evidence type="ECO:0000269" key="12">
    <source>
    </source>
</evidence>
<evidence type="ECO:0000269" key="13">
    <source>
    </source>
</evidence>
<evidence type="ECO:0000269" key="14">
    <source>
    </source>
</evidence>
<evidence type="ECO:0000269" key="15">
    <source>
    </source>
</evidence>
<evidence type="ECO:0000269" key="16">
    <source>
    </source>
</evidence>
<evidence type="ECO:0000269" key="17">
    <source>
    </source>
</evidence>
<evidence type="ECO:0000269" key="18">
    <source>
    </source>
</evidence>
<evidence type="ECO:0000269" key="19">
    <source>
    </source>
</evidence>
<evidence type="ECO:0000269" key="20">
    <source>
    </source>
</evidence>
<evidence type="ECO:0000305" key="21"/>
<evidence type="ECO:0007744" key="22">
    <source>
    </source>
</evidence>
<evidence type="ECO:0007744" key="23">
    <source>
    </source>
</evidence>
<evidence type="ECO:0007829" key="24">
    <source>
        <dbReference type="PDB" id="4DC2"/>
    </source>
</evidence>
<sequence length="595" mass="68203">MPTQRDSSTMSHTVACGGGGDHSHQVRVKAYYRGDIMITHFEPSISFEGLCSEVRDMCSFDNEQPFTMKWIDEEGDPCTVSSQLELEEAFRLYELNKDSELLIHVFPCVPERPGMPCPGEDKSIYRRGARRWRKLYCANGHTFQAKRFNRRAHCAICTDRIWGLGRQGYKCINCKLLVHKKCHKLVTIECGRHSLPPEPMMPMDQTMHPDHTQTVIPYNPSSHESLDQVGEEKEAMNTRESGKASSSLGLQDFDLLRVIGRGSYAKVLLVRLKKTDRIYAMKVVKKELVNDDEDIDWVQTEKHVFEQASNHPFLVGLHSCFQTESRLFFVIEYVNGGDLMFHMQRQRKLPEEHARFYSAEISLALNYLHERGIIYRDLKLDNVLLDSEGHIKLTDYGMCKEGLRPGDTTSTFCGTPNYIAPEILRGEDYGFSVDWWALGVLMFEMMAGRSPFDIVGSSDNPDQNTEDYLFQVILEKQIRIPRSLSVKAASVLKSFLNKDPKERLGCHPQTGFADIQGHPFFRNVDWDMMEQKQVVPPFKPNISGEFGLDNFDSQFTNEPVQLTPDDDDIVRKIDQSEFEGFEYINPLLMSAEECV</sequence>
<feature type="initiator methionine" description="Removed" evidence="3">
    <location>
        <position position="1"/>
    </location>
</feature>
<feature type="chain" id="PRO_0000055711" description="Protein kinase C iota type">
    <location>
        <begin position="2"/>
        <end position="595"/>
    </location>
</feature>
<feature type="domain" description="PB1" evidence="7">
    <location>
        <begin position="25"/>
        <end position="108"/>
    </location>
</feature>
<feature type="domain" description="Protein kinase" evidence="4">
    <location>
        <begin position="253"/>
        <end position="521"/>
    </location>
</feature>
<feature type="domain" description="AGC-kinase C-terminal" evidence="6">
    <location>
        <begin position="522"/>
        <end position="593"/>
    </location>
</feature>
<feature type="zinc finger region" description="Phorbol-ester/DAG-type" evidence="5">
    <location>
        <begin position="140"/>
        <end position="190"/>
    </location>
</feature>
<feature type="region of interest" description="Disordered" evidence="9">
    <location>
        <begin position="1"/>
        <end position="21"/>
    </location>
</feature>
<feature type="region of interest" description="Regulatory domain" evidence="1">
    <location>
        <begin position="2"/>
        <end position="252"/>
    </location>
</feature>
<feature type="region of interest" description="Required for interaction with RAB2" evidence="1">
    <location>
        <begin position="2"/>
        <end position="28"/>
    </location>
</feature>
<feature type="region of interest" description="Interaction with PARD6A" evidence="1">
    <location>
        <begin position="72"/>
        <end position="91"/>
    </location>
</feature>
<feature type="short sequence motif" description="Pseudosubstrate">
    <location>
        <begin position="125"/>
        <end position="134"/>
    </location>
</feature>
<feature type="compositionally biased region" description="Polar residues" evidence="9">
    <location>
        <begin position="1"/>
        <end position="12"/>
    </location>
</feature>
<feature type="active site" description="Proton acceptor" evidence="4 8">
    <location>
        <position position="377"/>
    </location>
</feature>
<feature type="binding site" evidence="4">
    <location>
        <begin position="259"/>
        <end position="267"/>
    </location>
    <ligand>
        <name>ATP</name>
        <dbReference type="ChEBI" id="CHEBI:30616"/>
    </ligand>
</feature>
<feature type="binding site" evidence="4">
    <location>
        <position position="282"/>
    </location>
    <ligand>
        <name>ATP</name>
        <dbReference type="ChEBI" id="CHEBI:30616"/>
    </ligand>
</feature>
<feature type="modified residue" description="N-acetylproline" evidence="3">
    <location>
        <position position="2"/>
    </location>
</feature>
<feature type="modified residue" description="Phosphothreonine" evidence="3">
    <location>
        <position position="3"/>
    </location>
</feature>
<feature type="modified residue" description="Phosphoserine" evidence="3">
    <location>
        <position position="7"/>
    </location>
</feature>
<feature type="modified residue" description="Phosphoserine" evidence="3">
    <location>
        <position position="8"/>
    </location>
</feature>
<feature type="modified residue" description="Phosphothreonine" evidence="3">
    <location>
        <position position="9"/>
    </location>
</feature>
<feature type="modified residue" description="Phosphotyrosine; by SRC" evidence="3">
    <location>
        <position position="264"/>
    </location>
</feature>
<feature type="modified residue" description="Phosphotyrosine; by SRC" evidence="3">
    <location>
        <position position="279"/>
    </location>
</feature>
<feature type="modified residue" description="Phosphotyrosine; by SRC" evidence="3">
    <location>
        <position position="333"/>
    </location>
</feature>
<feature type="modified residue" description="Phosphothreonine" evidence="22">
    <location>
        <position position="411"/>
    </location>
</feature>
<feature type="modified residue" description="Phosphothreonine" evidence="19 23">
    <location>
        <position position="563"/>
    </location>
</feature>
<feature type="mutagenesis site" description="No effect on interaction with SQSTM1." evidence="11">
    <original>R</original>
    <variation>A</variation>
    <location>
        <position position="27"/>
    </location>
</feature>
<feature type="mutagenesis site" description="No effect on interaction with SQSTM1; when associated with A-29." evidence="11">
    <original>V</original>
    <variation>A</variation>
    <location>
        <position position="28"/>
    </location>
</feature>
<feature type="mutagenesis site" description="No effect on interaction with SQSTM1; when associated with A-118." evidence="11">
    <original>K</original>
    <variation>A</variation>
    <location>
        <position position="29"/>
    </location>
</feature>
<feature type="mutagenesis site" description="Loss of interaction with SQSTM1." evidence="11">
    <original>W</original>
    <variation>A</variation>
    <location>
        <position position="70"/>
    </location>
</feature>
<feature type="mutagenesis site" description="Loss of interaction with SQSTM1." evidence="11">
    <original>D</original>
    <variation>A</variation>
    <location>
        <position position="72"/>
    </location>
</feature>
<feature type="mutagenesis site" description="Loss of interaction with SQSTM1." evidence="11">
    <original>E</original>
    <variation>A</variation>
    <location>
        <position position="74"/>
    </location>
</feature>
<feature type="mutagenesis site" description="Loss of interaction with SQSTM1." evidence="11">
    <original>D</original>
    <variation>A</variation>
    <location>
        <position position="76"/>
    </location>
</feature>
<feature type="mutagenesis site" description="No effect on interaction with SQSTM1." evidence="11">
    <original>Q</original>
    <variation>A</variation>
    <location>
        <position position="83"/>
    </location>
</feature>
<feature type="mutagenesis site" description="Loss of interaction with SQSTM1." evidence="11">
    <original>E</original>
    <variation>A</variation>
    <location>
        <position position="85"/>
    </location>
</feature>
<feature type="helix" evidence="24">
    <location>
        <begin position="250"/>
        <end position="252"/>
    </location>
</feature>
<feature type="strand" evidence="24">
    <location>
        <begin position="253"/>
        <end position="261"/>
    </location>
</feature>
<feature type="strand" evidence="24">
    <location>
        <begin position="263"/>
        <end position="272"/>
    </location>
</feature>
<feature type="turn" evidence="24">
    <location>
        <begin position="273"/>
        <end position="275"/>
    </location>
</feature>
<feature type="strand" evidence="24">
    <location>
        <begin position="278"/>
        <end position="285"/>
    </location>
</feature>
<feature type="helix" evidence="24">
    <location>
        <begin position="286"/>
        <end position="288"/>
    </location>
</feature>
<feature type="helix" evidence="24">
    <location>
        <begin position="297"/>
        <end position="308"/>
    </location>
</feature>
<feature type="strand" evidence="24">
    <location>
        <begin position="317"/>
        <end position="322"/>
    </location>
</feature>
<feature type="strand" evidence="24">
    <location>
        <begin position="324"/>
        <end position="332"/>
    </location>
</feature>
<feature type="helix" evidence="24">
    <location>
        <begin position="339"/>
        <end position="346"/>
    </location>
</feature>
<feature type="helix" evidence="24">
    <location>
        <begin position="351"/>
        <end position="370"/>
    </location>
</feature>
<feature type="helix" evidence="24">
    <location>
        <begin position="380"/>
        <end position="382"/>
    </location>
</feature>
<feature type="strand" evidence="24">
    <location>
        <begin position="383"/>
        <end position="385"/>
    </location>
</feature>
<feature type="strand" evidence="24">
    <location>
        <begin position="391"/>
        <end position="393"/>
    </location>
</feature>
<feature type="helix" evidence="24">
    <location>
        <begin position="416"/>
        <end position="418"/>
    </location>
</feature>
<feature type="helix" evidence="24">
    <location>
        <begin position="421"/>
        <end position="424"/>
    </location>
</feature>
<feature type="helix" evidence="24">
    <location>
        <begin position="432"/>
        <end position="447"/>
    </location>
</feature>
<feature type="turn" evidence="24">
    <location>
        <begin position="453"/>
        <end position="456"/>
    </location>
</feature>
<feature type="helix" evidence="24">
    <location>
        <begin position="466"/>
        <end position="475"/>
    </location>
</feature>
<feature type="helix" evidence="24">
    <location>
        <begin position="486"/>
        <end position="495"/>
    </location>
</feature>
<feature type="turn" evidence="24">
    <location>
        <begin position="500"/>
        <end position="502"/>
    </location>
</feature>
<feature type="turn" evidence="24">
    <location>
        <begin position="508"/>
        <end position="510"/>
    </location>
</feature>
<feature type="helix" evidence="24">
    <location>
        <begin position="511"/>
        <end position="517"/>
    </location>
</feature>
<feature type="turn" evidence="24">
    <location>
        <begin position="519"/>
        <end position="523"/>
    </location>
</feature>
<feature type="helix" evidence="24">
    <location>
        <begin position="526"/>
        <end position="530"/>
    </location>
</feature>
<feature type="helix" evidence="24">
    <location>
        <begin position="548"/>
        <end position="550"/>
    </location>
</feature>
<feature type="helix" evidence="24">
    <location>
        <begin position="553"/>
        <end position="556"/>
    </location>
</feature>
<feature type="helix" evidence="24">
    <location>
        <begin position="567"/>
        <end position="570"/>
    </location>
</feature>
<feature type="helix" evidence="24">
    <location>
        <begin position="575"/>
        <end position="578"/>
    </location>
</feature>
<dbReference type="EC" id="2.7.11.13"/>
<dbReference type="EMBL" id="D28577">
    <property type="protein sequence ID" value="BAA32499.1"/>
    <property type="status" value="ALT_INIT"/>
    <property type="molecule type" value="mRNA"/>
</dbReference>
<dbReference type="EMBL" id="BC021630">
    <property type="protein sequence ID" value="AAH21630.1"/>
    <property type="status" value="ALT_INIT"/>
    <property type="molecule type" value="mRNA"/>
</dbReference>
<dbReference type="CCDS" id="CCDS17289.2"/>
<dbReference type="PIR" id="A53758">
    <property type="entry name" value="A53758"/>
</dbReference>
<dbReference type="RefSeq" id="NP_032883.2">
    <property type="nucleotide sequence ID" value="NM_008857.4"/>
</dbReference>
<dbReference type="PDB" id="4DC2">
    <property type="method" value="X-ray"/>
    <property type="resolution" value="2.40 A"/>
    <property type="chains" value="A=231-595"/>
</dbReference>
<dbReference type="PDBsum" id="4DC2"/>
<dbReference type="SMR" id="Q62074"/>
<dbReference type="BioGRID" id="202200">
    <property type="interactions" value="35"/>
</dbReference>
<dbReference type="CORUM" id="Q62074"/>
<dbReference type="DIP" id="DIP-32555N"/>
<dbReference type="FunCoup" id="Q62074">
    <property type="interactions" value="2145"/>
</dbReference>
<dbReference type="IntAct" id="Q62074">
    <property type="interactions" value="32"/>
</dbReference>
<dbReference type="STRING" id="10090.ENSMUSP00000103884"/>
<dbReference type="GlyGen" id="Q62074">
    <property type="glycosylation" value="2 sites, 1 N-linked glycan (1 site), 1 O-linked glycan (1 site)"/>
</dbReference>
<dbReference type="iPTMnet" id="Q62074"/>
<dbReference type="PhosphoSitePlus" id="Q62074"/>
<dbReference type="PaxDb" id="10090-ENSMUSP00000103884"/>
<dbReference type="ProteomicsDB" id="264793"/>
<dbReference type="Pumba" id="Q62074"/>
<dbReference type="Antibodypedia" id="4271">
    <property type="antibodies" value="247 antibodies from 37 providers"/>
</dbReference>
<dbReference type="DNASU" id="18759"/>
<dbReference type="Ensembl" id="ENSMUST00000108249.9">
    <property type="protein sequence ID" value="ENSMUSP00000103884.3"/>
    <property type="gene ID" value="ENSMUSG00000037643.15"/>
</dbReference>
<dbReference type="GeneID" id="18759"/>
<dbReference type="KEGG" id="mmu:18759"/>
<dbReference type="UCSC" id="uc008ovs.1">
    <property type="organism name" value="mouse"/>
</dbReference>
<dbReference type="AGR" id="MGI:99260"/>
<dbReference type="CTD" id="5584"/>
<dbReference type="MGI" id="MGI:99260">
    <property type="gene designation" value="Prkci"/>
</dbReference>
<dbReference type="VEuPathDB" id="HostDB:ENSMUSG00000037643"/>
<dbReference type="eggNOG" id="KOG0695">
    <property type="taxonomic scope" value="Eukaryota"/>
</dbReference>
<dbReference type="GeneTree" id="ENSGT00940000153497"/>
<dbReference type="HOGENOM" id="CLU_000288_63_29_1"/>
<dbReference type="InParanoid" id="Q62074"/>
<dbReference type="OMA" id="FTIKWID"/>
<dbReference type="OrthoDB" id="63267at2759"/>
<dbReference type="PhylomeDB" id="Q62074"/>
<dbReference type="TreeFam" id="TF102004"/>
<dbReference type="BRENDA" id="2.7.11.13">
    <property type="organism ID" value="3474"/>
</dbReference>
<dbReference type="Reactome" id="R-MMU-1912408">
    <property type="pathway name" value="Pre-NOTCH Transcription and Translation"/>
</dbReference>
<dbReference type="Reactome" id="R-MMU-209543">
    <property type="pathway name" value="p75NTR recruits signalling complexes"/>
</dbReference>
<dbReference type="Reactome" id="R-MMU-420029">
    <property type="pathway name" value="Tight junction interactions"/>
</dbReference>
<dbReference type="Reactome" id="R-MMU-9755511">
    <property type="pathway name" value="KEAP1-NFE2L2 pathway"/>
</dbReference>
<dbReference type="BioGRID-ORCS" id="18759">
    <property type="hits" value="2 hits in 83 CRISPR screens"/>
</dbReference>
<dbReference type="CD-CODE" id="01CA17F3">
    <property type="entry name" value="Centrosome"/>
</dbReference>
<dbReference type="CD-CODE" id="296927EE">
    <property type="entry name" value="Par complex"/>
</dbReference>
<dbReference type="ChiTaRS" id="Prkci">
    <property type="organism name" value="mouse"/>
</dbReference>
<dbReference type="EvolutionaryTrace" id="Q62074"/>
<dbReference type="PRO" id="PR:Q62074"/>
<dbReference type="Proteomes" id="UP000000589">
    <property type="component" value="Chromosome 3"/>
</dbReference>
<dbReference type="RNAct" id="Q62074">
    <property type="molecule type" value="protein"/>
</dbReference>
<dbReference type="Bgee" id="ENSMUSG00000037643">
    <property type="expression patterns" value="Expressed in molar tooth and 277 other cell types or tissues"/>
</dbReference>
<dbReference type="ExpressionAtlas" id="Q62074">
    <property type="expression patterns" value="baseline and differential"/>
</dbReference>
<dbReference type="GO" id="GO:0045177">
    <property type="term" value="C:apical part of cell"/>
    <property type="evidence" value="ECO:0000314"/>
    <property type="project" value="MGI"/>
</dbReference>
<dbReference type="GO" id="GO:0016324">
    <property type="term" value="C:apical plasma membrane"/>
    <property type="evidence" value="ECO:0000314"/>
    <property type="project" value="MGI"/>
</dbReference>
<dbReference type="GO" id="GO:0005923">
    <property type="term" value="C:bicellular tight junction"/>
    <property type="evidence" value="ECO:0007669"/>
    <property type="project" value="Ensembl"/>
</dbReference>
<dbReference type="GO" id="GO:0005903">
    <property type="term" value="C:brush border"/>
    <property type="evidence" value="ECO:0000314"/>
    <property type="project" value="MGI"/>
</dbReference>
<dbReference type="GO" id="GO:0031252">
    <property type="term" value="C:cell leading edge"/>
    <property type="evidence" value="ECO:0007669"/>
    <property type="project" value="Ensembl"/>
</dbReference>
<dbReference type="GO" id="GO:0005929">
    <property type="term" value="C:cilium"/>
    <property type="evidence" value="ECO:0007669"/>
    <property type="project" value="Ensembl"/>
</dbReference>
<dbReference type="GO" id="GO:0005737">
    <property type="term" value="C:cytoplasm"/>
    <property type="evidence" value="ECO:0000314"/>
    <property type="project" value="MGI"/>
</dbReference>
<dbReference type="GO" id="GO:0005829">
    <property type="term" value="C:cytosol"/>
    <property type="evidence" value="ECO:0000250"/>
    <property type="project" value="HGNC"/>
</dbReference>
<dbReference type="GO" id="GO:0005768">
    <property type="term" value="C:endosome"/>
    <property type="evidence" value="ECO:0007669"/>
    <property type="project" value="UniProtKB-SubCell"/>
</dbReference>
<dbReference type="GO" id="GO:0098978">
    <property type="term" value="C:glutamatergic synapse"/>
    <property type="evidence" value="ECO:0007669"/>
    <property type="project" value="Ensembl"/>
</dbReference>
<dbReference type="GO" id="GO:0000139">
    <property type="term" value="C:Golgi membrane"/>
    <property type="evidence" value="ECO:0007669"/>
    <property type="project" value="GOC"/>
</dbReference>
<dbReference type="GO" id="GO:0045171">
    <property type="term" value="C:intercellular bridge"/>
    <property type="evidence" value="ECO:0007669"/>
    <property type="project" value="Ensembl"/>
</dbReference>
<dbReference type="GO" id="GO:0015630">
    <property type="term" value="C:microtubule cytoskeleton"/>
    <property type="evidence" value="ECO:0007669"/>
    <property type="project" value="Ensembl"/>
</dbReference>
<dbReference type="GO" id="GO:0005634">
    <property type="term" value="C:nucleus"/>
    <property type="evidence" value="ECO:0000314"/>
    <property type="project" value="MGI"/>
</dbReference>
<dbReference type="GO" id="GO:0120157">
    <property type="term" value="C:PAR polarity complex"/>
    <property type="evidence" value="ECO:0007669"/>
    <property type="project" value="Ensembl"/>
</dbReference>
<dbReference type="GO" id="GO:0098685">
    <property type="term" value="C:Schaffer collateral - CA1 synapse"/>
    <property type="evidence" value="ECO:0007669"/>
    <property type="project" value="Ensembl"/>
</dbReference>
<dbReference type="GO" id="GO:0043220">
    <property type="term" value="C:Schmidt-Lanterman incisure"/>
    <property type="evidence" value="ECO:0000314"/>
    <property type="project" value="BHF-UCL"/>
</dbReference>
<dbReference type="GO" id="GO:0005524">
    <property type="term" value="F:ATP binding"/>
    <property type="evidence" value="ECO:0007669"/>
    <property type="project" value="UniProtKB-KW"/>
</dbReference>
<dbReference type="GO" id="GO:0004699">
    <property type="term" value="F:diacylglycerol-dependent, calcium-independent serine/threonine kinase activity"/>
    <property type="evidence" value="ECO:0000314"/>
    <property type="project" value="BHF-UCL"/>
</dbReference>
<dbReference type="GO" id="GO:0005543">
    <property type="term" value="F:phospholipid binding"/>
    <property type="evidence" value="ECO:0000250"/>
    <property type="project" value="HGNC"/>
</dbReference>
<dbReference type="GO" id="GO:0004672">
    <property type="term" value="F:protein kinase activity"/>
    <property type="evidence" value="ECO:0000250"/>
    <property type="project" value="UniProtKB"/>
</dbReference>
<dbReference type="GO" id="GO:0106310">
    <property type="term" value="F:protein serine kinase activity"/>
    <property type="evidence" value="ECO:0007669"/>
    <property type="project" value="RHEA"/>
</dbReference>
<dbReference type="GO" id="GO:0004674">
    <property type="term" value="F:protein serine/threonine kinase activity"/>
    <property type="evidence" value="ECO:0000250"/>
    <property type="project" value="HGNC"/>
</dbReference>
<dbReference type="GO" id="GO:0008270">
    <property type="term" value="F:zinc ion binding"/>
    <property type="evidence" value="ECO:0007669"/>
    <property type="project" value="UniProtKB-KW"/>
</dbReference>
<dbReference type="GO" id="GO:0007015">
    <property type="term" value="P:actin filament organization"/>
    <property type="evidence" value="ECO:0000315"/>
    <property type="project" value="MGI"/>
</dbReference>
<dbReference type="GO" id="GO:0016477">
    <property type="term" value="P:cell migration"/>
    <property type="evidence" value="ECO:0007669"/>
    <property type="project" value="Ensembl"/>
</dbReference>
<dbReference type="GO" id="GO:0045216">
    <property type="term" value="P:cell-cell junction organization"/>
    <property type="evidence" value="ECO:0000250"/>
    <property type="project" value="HGNC"/>
</dbReference>
<dbReference type="GO" id="GO:0032869">
    <property type="term" value="P:cellular response to insulin stimulus"/>
    <property type="evidence" value="ECO:0000315"/>
    <property type="project" value="BHF-UCL"/>
</dbReference>
<dbReference type="GO" id="GO:0035089">
    <property type="term" value="P:establishment of apical/basal cell polarity"/>
    <property type="evidence" value="ECO:0000315"/>
    <property type="project" value="MGI"/>
</dbReference>
<dbReference type="GO" id="GO:0045197">
    <property type="term" value="P:establishment or maintenance of epithelial cell apical/basal polarity"/>
    <property type="evidence" value="ECO:0007669"/>
    <property type="project" value="Ensembl"/>
</dbReference>
<dbReference type="GO" id="GO:0042462">
    <property type="term" value="P:eye photoreceptor cell development"/>
    <property type="evidence" value="ECO:0000315"/>
    <property type="project" value="MGI"/>
</dbReference>
<dbReference type="GO" id="GO:0048194">
    <property type="term" value="P:Golgi vesicle budding"/>
    <property type="evidence" value="ECO:0007669"/>
    <property type="project" value="Ensembl"/>
</dbReference>
<dbReference type="GO" id="GO:0034351">
    <property type="term" value="P:negative regulation of glial cell apoptotic process"/>
    <property type="evidence" value="ECO:0000250"/>
    <property type="project" value="UniProtKB"/>
</dbReference>
<dbReference type="GO" id="GO:0043524">
    <property type="term" value="P:negative regulation of neuron apoptotic process"/>
    <property type="evidence" value="ECO:0000250"/>
    <property type="project" value="UniProtKB"/>
</dbReference>
<dbReference type="GO" id="GO:0046326">
    <property type="term" value="P:positive regulation of D-glucose import"/>
    <property type="evidence" value="ECO:0000315"/>
    <property type="project" value="BHF-UCL"/>
</dbReference>
<dbReference type="GO" id="GO:2000353">
    <property type="term" value="P:positive regulation of endothelial cell apoptotic process"/>
    <property type="evidence" value="ECO:0000250"/>
    <property type="project" value="UniProtKB"/>
</dbReference>
<dbReference type="GO" id="GO:0060252">
    <property type="term" value="P:positive regulation of glial cell proliferation"/>
    <property type="evidence" value="ECO:0000250"/>
    <property type="project" value="UniProtKB"/>
</dbReference>
<dbReference type="GO" id="GO:0010976">
    <property type="term" value="P:positive regulation of neuron projection development"/>
    <property type="evidence" value="ECO:0000250"/>
    <property type="project" value="UniProtKB"/>
</dbReference>
<dbReference type="GO" id="GO:0051092">
    <property type="term" value="P:positive regulation of NF-kappaB transcription factor activity"/>
    <property type="evidence" value="ECO:0000250"/>
    <property type="project" value="UniProtKB"/>
</dbReference>
<dbReference type="GO" id="GO:1903078">
    <property type="term" value="P:positive regulation of protein localization to plasma membrane"/>
    <property type="evidence" value="ECO:0000315"/>
    <property type="project" value="BHF-UCL"/>
</dbReference>
<dbReference type="GO" id="GO:0099072">
    <property type="term" value="P:regulation of postsynaptic membrane neurotransmitter receptor levels"/>
    <property type="evidence" value="ECO:0007669"/>
    <property type="project" value="Ensembl"/>
</dbReference>
<dbReference type="GO" id="GO:0070555">
    <property type="term" value="P:response to interleukin-1"/>
    <property type="evidence" value="ECO:0007669"/>
    <property type="project" value="Ensembl"/>
</dbReference>
<dbReference type="CDD" id="cd20794">
    <property type="entry name" value="C1_aPKC"/>
    <property type="match status" value="1"/>
</dbReference>
<dbReference type="CDD" id="cd06404">
    <property type="entry name" value="PB1_aPKC"/>
    <property type="match status" value="1"/>
</dbReference>
<dbReference type="CDD" id="cd05618">
    <property type="entry name" value="STKc_aPKC_iota"/>
    <property type="match status" value="1"/>
</dbReference>
<dbReference type="FunFam" id="1.10.510.10:FF:000048">
    <property type="entry name" value="Protein kinase C"/>
    <property type="match status" value="1"/>
</dbReference>
<dbReference type="FunFam" id="3.10.20.90:FF:000071">
    <property type="entry name" value="Protein kinase C"/>
    <property type="match status" value="1"/>
</dbReference>
<dbReference type="FunFam" id="3.30.200.20:FF:000070">
    <property type="entry name" value="Protein kinase C"/>
    <property type="match status" value="1"/>
</dbReference>
<dbReference type="FunFam" id="3.30.60.20:FF:000012">
    <property type="entry name" value="Protein kinase C"/>
    <property type="match status" value="1"/>
</dbReference>
<dbReference type="Gene3D" id="3.30.60.20">
    <property type="match status" value="1"/>
</dbReference>
<dbReference type="Gene3D" id="3.10.20.90">
    <property type="entry name" value="Phosphatidylinositol 3-kinase Catalytic Subunit, Chain A, domain 1"/>
    <property type="match status" value="1"/>
</dbReference>
<dbReference type="Gene3D" id="3.30.200.20">
    <property type="entry name" value="Phosphorylase Kinase, domain 1"/>
    <property type="match status" value="1"/>
</dbReference>
<dbReference type="Gene3D" id="1.10.510.10">
    <property type="entry name" value="Transferase(Phosphotransferase) domain 1"/>
    <property type="match status" value="1"/>
</dbReference>
<dbReference type="InterPro" id="IPR000961">
    <property type="entry name" value="AGC-kinase_C"/>
</dbReference>
<dbReference type="InterPro" id="IPR034661">
    <property type="entry name" value="aPKC_iota"/>
</dbReference>
<dbReference type="InterPro" id="IPR046349">
    <property type="entry name" value="C1-like_sf"/>
</dbReference>
<dbReference type="InterPro" id="IPR020454">
    <property type="entry name" value="DAG/PE-bd"/>
</dbReference>
<dbReference type="InterPro" id="IPR011009">
    <property type="entry name" value="Kinase-like_dom_sf"/>
</dbReference>
<dbReference type="InterPro" id="IPR053793">
    <property type="entry name" value="PB1-like"/>
</dbReference>
<dbReference type="InterPro" id="IPR034877">
    <property type="entry name" value="PB1_aPKC"/>
</dbReference>
<dbReference type="InterPro" id="IPR000270">
    <property type="entry name" value="PB1_dom"/>
</dbReference>
<dbReference type="InterPro" id="IPR002219">
    <property type="entry name" value="PE/DAG-bd"/>
</dbReference>
<dbReference type="InterPro" id="IPR012233">
    <property type="entry name" value="PKC"/>
</dbReference>
<dbReference type="InterPro" id="IPR017892">
    <property type="entry name" value="Pkinase_C"/>
</dbReference>
<dbReference type="InterPro" id="IPR000719">
    <property type="entry name" value="Prot_kinase_dom"/>
</dbReference>
<dbReference type="InterPro" id="IPR017441">
    <property type="entry name" value="Protein_kinase_ATP_BS"/>
</dbReference>
<dbReference type="InterPro" id="IPR008271">
    <property type="entry name" value="Ser/Thr_kinase_AS"/>
</dbReference>
<dbReference type="PANTHER" id="PTHR24351">
    <property type="entry name" value="RIBOSOMAL PROTEIN S6 KINASE"/>
    <property type="match status" value="1"/>
</dbReference>
<dbReference type="Pfam" id="PF00130">
    <property type="entry name" value="C1_1"/>
    <property type="match status" value="1"/>
</dbReference>
<dbReference type="Pfam" id="PF00564">
    <property type="entry name" value="PB1"/>
    <property type="match status" value="1"/>
</dbReference>
<dbReference type="Pfam" id="PF00069">
    <property type="entry name" value="Pkinase"/>
    <property type="match status" value="1"/>
</dbReference>
<dbReference type="Pfam" id="PF00433">
    <property type="entry name" value="Pkinase_C"/>
    <property type="match status" value="1"/>
</dbReference>
<dbReference type="PIRSF" id="PIRSF000554">
    <property type="entry name" value="PKC_zeta"/>
    <property type="match status" value="1"/>
</dbReference>
<dbReference type="PRINTS" id="PR00008">
    <property type="entry name" value="DAGPEDOMAIN"/>
</dbReference>
<dbReference type="SMART" id="SM00109">
    <property type="entry name" value="C1"/>
    <property type="match status" value="1"/>
</dbReference>
<dbReference type="SMART" id="SM00666">
    <property type="entry name" value="PB1"/>
    <property type="match status" value="1"/>
</dbReference>
<dbReference type="SMART" id="SM00133">
    <property type="entry name" value="S_TK_X"/>
    <property type="match status" value="1"/>
</dbReference>
<dbReference type="SMART" id="SM00220">
    <property type="entry name" value="S_TKc"/>
    <property type="match status" value="1"/>
</dbReference>
<dbReference type="SUPFAM" id="SSF54277">
    <property type="entry name" value="CAD &amp; PB1 domains"/>
    <property type="match status" value="1"/>
</dbReference>
<dbReference type="SUPFAM" id="SSF57889">
    <property type="entry name" value="Cysteine-rich domain"/>
    <property type="match status" value="1"/>
</dbReference>
<dbReference type="SUPFAM" id="SSF56112">
    <property type="entry name" value="Protein kinase-like (PK-like)"/>
    <property type="match status" value="1"/>
</dbReference>
<dbReference type="PROSITE" id="PS51285">
    <property type="entry name" value="AGC_KINASE_CTER"/>
    <property type="match status" value="1"/>
</dbReference>
<dbReference type="PROSITE" id="PS51745">
    <property type="entry name" value="PB1"/>
    <property type="match status" value="1"/>
</dbReference>
<dbReference type="PROSITE" id="PS00107">
    <property type="entry name" value="PROTEIN_KINASE_ATP"/>
    <property type="match status" value="1"/>
</dbReference>
<dbReference type="PROSITE" id="PS50011">
    <property type="entry name" value="PROTEIN_KINASE_DOM"/>
    <property type="match status" value="1"/>
</dbReference>
<dbReference type="PROSITE" id="PS00108">
    <property type="entry name" value="PROTEIN_KINASE_ST"/>
    <property type="match status" value="1"/>
</dbReference>
<dbReference type="PROSITE" id="PS00479">
    <property type="entry name" value="ZF_DAG_PE_1"/>
    <property type="match status" value="1"/>
</dbReference>
<dbReference type="PROSITE" id="PS50081">
    <property type="entry name" value="ZF_DAG_PE_2"/>
    <property type="match status" value="1"/>
</dbReference>
<reference key="1">
    <citation type="journal article" date="1994" name="J. Biol. Chem.">
        <title>A new member of the third class in the protein kinase C family, PKC lambda, expressed dominantly in an undifferentiated mouse embryonal carcinoma cell line and also in many tissues and cells.</title>
        <authorList>
            <person name="Akimoto K."/>
            <person name="Mizuno K."/>
            <person name="Osada S."/>
            <person name="Hirai S."/>
            <person name="Tanuma S."/>
            <person name="Suzuki K."/>
            <person name="Ohno S."/>
        </authorList>
    </citation>
    <scope>NUCLEOTIDE SEQUENCE [MRNA]</scope>
</reference>
<reference key="2">
    <citation type="journal article" date="2004" name="Genome Res.">
        <title>The status, quality, and expansion of the NIH full-length cDNA project: the Mammalian Gene Collection (MGC).</title>
        <authorList>
            <consortium name="The MGC Project Team"/>
        </authorList>
    </citation>
    <scope>NUCLEOTIDE SEQUENCE [LARGE SCALE MRNA]</scope>
</reference>
<reference key="3">
    <citation type="journal article" date="1999" name="J. Cell Biol.">
        <title>Evidence that atypical protein kinase C-lambda and atypical protein kinase C-zeta participate in Ras-mediated reorganization of the F-actin cytoskeleton.</title>
        <authorList>
            <person name="Uberall F."/>
            <person name="Hellbert K."/>
            <person name="Kampfer S."/>
            <person name="Maly K."/>
            <person name="Villunger A."/>
            <person name="Spitaler M."/>
            <person name="Mwanjewe J."/>
            <person name="Baier-Bitterlich G."/>
            <person name="Baier G."/>
            <person name="Grunicke H.H."/>
        </authorList>
    </citation>
    <scope>FUNCTION</scope>
</reference>
<reference key="4">
    <citation type="journal article" date="2000" name="Nat. Cell Biol.">
        <title>The cell-polarity protein Par6 links Par3 and atypical protein kinase C to Cdc42.</title>
        <authorList>
            <person name="Joberty G."/>
            <person name="Petersen C."/>
            <person name="Gao L."/>
            <person name="Macara I.G."/>
        </authorList>
    </citation>
    <scope>SUBUNIT OF A COMPLEX CONTAINING PARD6B; PARD3 AND CDC42</scope>
</reference>
<reference key="5">
    <citation type="journal article" date="2003" name="J. Biol. Chem.">
        <title>Interaction codes within the family of mammalian Phox and Bem1p domain-containing proteins.</title>
        <authorList>
            <person name="Lamark T."/>
            <person name="Perander M."/>
            <person name="Outzen H."/>
            <person name="Kristiansen K."/>
            <person name="Oevervatn A."/>
            <person name="Michaelsen E."/>
            <person name="Bjoerkoey G."/>
            <person name="Johansen T."/>
        </authorList>
    </citation>
    <scope>INTERACTION WITH SQSTM1 AND MAP2K5</scope>
    <scope>MUTAGENESIS OF ARG-27; VAL-28; LYS-29; TRP-70; ASP-72; GLU-74; ASP-76; GLN-83 AND GLU-85</scope>
</reference>
<reference key="6">
    <citation type="journal article" date="2003" name="Mol. Cell. Biol.">
        <title>Insulin-induced GLUT4 translocation involves protein kinase C-lambda-mediated functional coupling between Rab4 and the motor protein kinesin.</title>
        <authorList>
            <person name="Imamura T."/>
            <person name="Huang J."/>
            <person name="Usui I."/>
            <person name="Satoh H."/>
            <person name="Bever J."/>
            <person name="Olefsky J.M."/>
        </authorList>
    </citation>
    <scope>FUNCTION</scope>
</reference>
<reference key="7">
    <citation type="journal article" date="2004" name="J. Immunol.">
        <title>Targeted deletion of protein kinase C lambda reveals a distribution of functions between the two atypical protein kinase C isoforms.</title>
        <authorList>
            <person name="Soloff R.S."/>
            <person name="Katayama C."/>
            <person name="Lin M.Y."/>
            <person name="Feramisco J.R."/>
            <person name="Hedrick S.M."/>
        </authorList>
    </citation>
    <scope>FUNCTION</scope>
    <scope>DISRUPTION PHENOTYPE</scope>
</reference>
<reference key="8">
    <citation type="journal article" date="2004" name="Mol. Endocrinol.">
        <title>Protein kinase C-lambda knockout in embryonic stem cells and adipocytes impairs insulin-stimulated glucose transport.</title>
        <authorList>
            <person name="Bandyopadhyay G."/>
            <person name="Standaert M.L."/>
            <person name="Sajan M.P."/>
            <person name="Kanoh Y."/>
            <person name="Miura A."/>
            <person name="Braun U."/>
            <person name="Kruse F."/>
            <person name="Leitges M."/>
            <person name="Farese R.V."/>
        </authorList>
    </citation>
    <scope>FUNCTION</scope>
</reference>
<reference key="9">
    <citation type="journal article" date="2005" name="J. Neurosci.">
        <title>Function of atypical protein kinase C lambda in differentiating photoreceptors is required for proper lamination of mouse retina.</title>
        <authorList>
            <person name="Koike C."/>
            <person name="Nishida A."/>
            <person name="Akimoto K."/>
            <person name="Nakaya M.A."/>
            <person name="Noda T."/>
            <person name="Ohno S."/>
            <person name="Furukawa T."/>
        </authorList>
    </citation>
    <scope>FUNCTION</scope>
</reference>
<reference key="10">
    <citation type="journal article" date="2006" name="Biochem. J.">
        <title>A WD-FYVE protein binds to the kinases Akt and PKCzeta/lambda.</title>
        <authorList>
            <person name="Fritzius T."/>
            <person name="Burkard G."/>
            <person name="Haas E."/>
            <person name="Heinrich J."/>
            <person name="Schweneker M."/>
            <person name="Bosse M."/>
            <person name="Zimmermann S."/>
            <person name="Frey A.D."/>
            <person name="Caelers A."/>
            <person name="Bachmann A.S."/>
            <person name="Moelling K."/>
        </authorList>
    </citation>
    <scope>INTERACTION WITH WDFY2</scope>
</reference>
<reference key="11">
    <citation type="journal article" date="2007" name="FEBS J.">
        <title>WD-repeat-propeller-FYVE protein, ProF, binds VAMP2 and protein kinase Czeta.</title>
        <authorList>
            <person name="Fritzius T."/>
            <person name="Frey A.D."/>
            <person name="Schweneker M."/>
            <person name="Mayer D."/>
            <person name="Moelling K."/>
        </authorList>
    </citation>
    <scope>INTERACTION WITH VAMP2</scope>
</reference>
<reference key="12">
    <citation type="journal article" date="2007" name="Proc. Natl. Acad. Sci. U.S.A.">
        <title>Large-scale phosphorylation analysis of mouse liver.</title>
        <authorList>
            <person name="Villen J."/>
            <person name="Beausoleil S.A."/>
            <person name="Gerber S.A."/>
            <person name="Gygi S.P."/>
        </authorList>
    </citation>
    <scope>PHOSPHORYLATION [LARGE SCALE ANALYSIS] AT THR-411</scope>
    <scope>IDENTIFICATION BY MASS SPECTROMETRY [LARGE SCALE ANALYSIS]</scope>
    <source>
        <tissue>Liver</tissue>
    </source>
</reference>
<reference key="13">
    <citation type="journal article" date="2010" name="Cell">
        <title>A tissue-specific atlas of mouse protein phosphorylation and expression.</title>
        <authorList>
            <person name="Huttlin E.L."/>
            <person name="Jedrychowski M.P."/>
            <person name="Elias J.E."/>
            <person name="Goswami T."/>
            <person name="Rad R."/>
            <person name="Beausoleil S.A."/>
            <person name="Villen J."/>
            <person name="Haas W."/>
            <person name="Sowa M.E."/>
            <person name="Gygi S.P."/>
        </authorList>
    </citation>
    <scope>PHOSPHORYLATION [LARGE SCALE ANALYSIS] AT THR-563</scope>
    <scope>IDENTIFICATION BY MASS SPECTROMETRY [LARGE SCALE ANALYSIS]</scope>
    <source>
        <tissue>Brain</tissue>
        <tissue>Kidney</tissue>
        <tissue>Lung</tissue>
        <tissue>Pancreas</tissue>
        <tissue>Testis</tissue>
    </source>
</reference>
<reference key="14">
    <citation type="journal article" date="2010" name="Neuron">
        <title>The apical complex couples cell fate and cell survival to cerebral cortical development.</title>
        <authorList>
            <person name="Kim S."/>
            <person name="Lehtinen M.K."/>
            <person name="Sessa A."/>
            <person name="Zappaterra M.W."/>
            <person name="Cho S.H."/>
            <person name="Gonzalez D."/>
            <person name="Boggan B."/>
            <person name="Austin C.A."/>
            <person name="Wijnholds J."/>
            <person name="Gambello M.J."/>
            <person name="Malicki J."/>
            <person name="LaMantia A.S."/>
            <person name="Broccoli V."/>
            <person name="Walsh C.A."/>
        </authorList>
    </citation>
    <scope>DEVELOPMENTAL STAGE</scope>
</reference>
<reference key="15">
    <citation type="journal article" date="2012" name="Structure">
        <title>Substrate recognition mechanism of atypical protein kinase Cs revealed by the structure of PKCiota in complex with a substrate peptide from Par-3.</title>
        <authorList>
            <person name="Wang C."/>
            <person name="Shang Y."/>
            <person name="Yu J."/>
            <person name="Zhang M."/>
        </authorList>
    </citation>
    <scope>X-RAY CRYSTALLOGRAPHY (2.4 ANGSTROMS) OF 231-595 IN COMPLEX WITH RAT PARD3 PEPTIDE</scope>
    <scope>PHOSPHORYLATION AT THR-563</scope>
    <scope>PSEUDOSUBSTRATE MOTIF</scope>
</reference>